<sequence>MAKEDTTQALYKEAFNLFDKDKDGKITIQELGIVMRSVGSNPTQQELKDIAKEIDDGSGLVDFSKFSSLMTRKMKYSDSEADIKQAFKVFDKKGNGYANIQDLKHTLTSIGEKLTKEEFDNMLKDAKTVDGQIHVDEFVRVIKSSKSFN</sequence>
<evidence type="ECO:0000250" key="1"/>
<evidence type="ECO:0000255" key="2">
    <source>
        <dbReference type="PROSITE-ProRule" id="PRU00448"/>
    </source>
</evidence>
<evidence type="ECO:0000269" key="3">
    <source>
    </source>
</evidence>
<evidence type="ECO:0000305" key="4"/>
<comment type="function">
    <text evidence="1">Mediates the control of a large number of enzymes, ion channels and other proteins by Ca(2+) ions. Among the enzymes to be stimulated by the calmodulin-Ca(2+) complex are a number of protein kinases and phosphatases (By similarity).</text>
</comment>
<comment type="subcellular location">
    <subcellularLocation>
        <location evidence="1">Contractile vacuole</location>
    </subcellularLocation>
</comment>
<comment type="developmental stage">
    <text evidence="3">The calB transcript is very low in vegetative cells, it accumulates to higher levels during aggregation and during slug formation. It is present in its highest level in spores.</text>
</comment>
<comment type="similarity">
    <text evidence="4">Belongs to the calmodulin family.</text>
</comment>
<name>CALML_DICDI</name>
<proteinExistence type="evidence at transcript level"/>
<reference key="1">
    <citation type="journal article" date="2000" name="FEBS Lett.">
        <title>Molecular characterization of a calmodulin-like dictyostelium protein CalB.</title>
        <authorList>
            <person name="Rosel D."/>
            <person name="Puta F."/>
            <person name="Blahuskova A."/>
            <person name="Smykal P."/>
            <person name="Folk P."/>
        </authorList>
    </citation>
    <scope>NUCLEOTIDE SEQUENCE [GENOMIC DNA]</scope>
    <scope>DEVELOPMENTAL STAGE</scope>
    <source>
        <strain>AX3</strain>
    </source>
</reference>
<reference key="2">
    <citation type="journal article" date="2005" name="Nature">
        <title>The genome of the social amoeba Dictyostelium discoideum.</title>
        <authorList>
            <person name="Eichinger L."/>
            <person name="Pachebat J.A."/>
            <person name="Gloeckner G."/>
            <person name="Rajandream M.A."/>
            <person name="Sucgang R."/>
            <person name="Berriman M."/>
            <person name="Song J."/>
            <person name="Olsen R."/>
            <person name="Szafranski K."/>
            <person name="Xu Q."/>
            <person name="Tunggal B."/>
            <person name="Kummerfeld S."/>
            <person name="Madera M."/>
            <person name="Konfortov B.A."/>
            <person name="Rivero F."/>
            <person name="Bankier A.T."/>
            <person name="Lehmann R."/>
            <person name="Hamlin N."/>
            <person name="Davies R."/>
            <person name="Gaudet P."/>
            <person name="Fey P."/>
            <person name="Pilcher K."/>
            <person name="Chen G."/>
            <person name="Saunders D."/>
            <person name="Sodergren E.J."/>
            <person name="Davis P."/>
            <person name="Kerhornou A."/>
            <person name="Nie X."/>
            <person name="Hall N."/>
            <person name="Anjard C."/>
            <person name="Hemphill L."/>
            <person name="Bason N."/>
            <person name="Farbrother P."/>
            <person name="Desany B."/>
            <person name="Just E."/>
            <person name="Morio T."/>
            <person name="Rost R."/>
            <person name="Churcher C.M."/>
            <person name="Cooper J."/>
            <person name="Haydock S."/>
            <person name="van Driessche N."/>
            <person name="Cronin A."/>
            <person name="Goodhead I."/>
            <person name="Muzny D.M."/>
            <person name="Mourier T."/>
            <person name="Pain A."/>
            <person name="Lu M."/>
            <person name="Harper D."/>
            <person name="Lindsay R."/>
            <person name="Hauser H."/>
            <person name="James K.D."/>
            <person name="Quiles M."/>
            <person name="Madan Babu M."/>
            <person name="Saito T."/>
            <person name="Buchrieser C."/>
            <person name="Wardroper A."/>
            <person name="Felder M."/>
            <person name="Thangavelu M."/>
            <person name="Johnson D."/>
            <person name="Knights A."/>
            <person name="Loulseged H."/>
            <person name="Mungall K.L."/>
            <person name="Oliver K."/>
            <person name="Price C."/>
            <person name="Quail M.A."/>
            <person name="Urushihara H."/>
            <person name="Hernandez J."/>
            <person name="Rabbinowitsch E."/>
            <person name="Steffen D."/>
            <person name="Sanders M."/>
            <person name="Ma J."/>
            <person name="Kohara Y."/>
            <person name="Sharp S."/>
            <person name="Simmonds M.N."/>
            <person name="Spiegler S."/>
            <person name="Tivey A."/>
            <person name="Sugano S."/>
            <person name="White B."/>
            <person name="Walker D."/>
            <person name="Woodward J.R."/>
            <person name="Winckler T."/>
            <person name="Tanaka Y."/>
            <person name="Shaulsky G."/>
            <person name="Schleicher M."/>
            <person name="Weinstock G.M."/>
            <person name="Rosenthal A."/>
            <person name="Cox E.C."/>
            <person name="Chisholm R.L."/>
            <person name="Gibbs R.A."/>
            <person name="Loomis W.F."/>
            <person name="Platzer M."/>
            <person name="Kay R.R."/>
            <person name="Williams J.G."/>
            <person name="Dear P.H."/>
            <person name="Noegel A.A."/>
            <person name="Barrell B.G."/>
            <person name="Kuspa A."/>
        </authorList>
    </citation>
    <scope>NUCLEOTIDE SEQUENCE [LARGE SCALE GENOMIC DNA]</scope>
    <source>
        <strain>AX4</strain>
    </source>
</reference>
<dbReference type="EMBL" id="AF001981">
    <property type="protein sequence ID" value="AAB60882.1"/>
    <property type="molecule type" value="Genomic_DNA"/>
</dbReference>
<dbReference type="EMBL" id="AAFI02000005">
    <property type="protein sequence ID" value="EAL71901.1"/>
    <property type="molecule type" value="Genomic_DNA"/>
</dbReference>
<dbReference type="RefSeq" id="XP_646060.1">
    <property type="nucleotide sequence ID" value="XM_640968.1"/>
</dbReference>
<dbReference type="SMR" id="O00897"/>
<dbReference type="STRING" id="44689.O00897"/>
<dbReference type="PaxDb" id="44689-DDB0191193"/>
<dbReference type="EnsemblProtists" id="EAL71901">
    <property type="protein sequence ID" value="EAL71901"/>
    <property type="gene ID" value="DDB_G0269104"/>
</dbReference>
<dbReference type="GeneID" id="8617008"/>
<dbReference type="KEGG" id="ddi:DDB_G0269104"/>
<dbReference type="dictyBase" id="DDB_G0269104">
    <property type="gene designation" value="calB"/>
</dbReference>
<dbReference type="VEuPathDB" id="AmoebaDB:DDB_G0269104"/>
<dbReference type="eggNOG" id="KOG0027">
    <property type="taxonomic scope" value="Eukaryota"/>
</dbReference>
<dbReference type="HOGENOM" id="CLU_061288_2_0_1"/>
<dbReference type="InParanoid" id="O00897"/>
<dbReference type="OMA" id="EEFQIAM"/>
<dbReference type="PhylomeDB" id="O00897"/>
<dbReference type="Reactome" id="R-DDI-111932">
    <property type="pathway name" value="CaMK IV-mediated phosphorylation of CREB"/>
</dbReference>
<dbReference type="Reactome" id="R-DDI-111957">
    <property type="pathway name" value="Cam-PDE 1 activation"/>
</dbReference>
<dbReference type="Reactome" id="R-DDI-114608">
    <property type="pathway name" value="Platelet degranulation"/>
</dbReference>
<dbReference type="Reactome" id="R-DDI-1474151">
    <property type="pathway name" value="Tetrahydrobiopterin (BH4) synthesis, recycling, salvage and regulation"/>
</dbReference>
<dbReference type="Reactome" id="R-DDI-163615">
    <property type="pathway name" value="PKA activation"/>
</dbReference>
<dbReference type="Reactome" id="R-DDI-1855204">
    <property type="pathway name" value="Synthesis of IP3 and IP4 in the cytosol"/>
</dbReference>
<dbReference type="Reactome" id="R-DDI-203615">
    <property type="pathway name" value="eNOS activation"/>
</dbReference>
<dbReference type="Reactome" id="R-DDI-2871809">
    <property type="pathway name" value="FCERI mediated Ca+2 mobilization"/>
</dbReference>
<dbReference type="Reactome" id="R-DDI-4086398">
    <property type="pathway name" value="Ca2+ pathway"/>
</dbReference>
<dbReference type="Reactome" id="R-DDI-442729">
    <property type="pathway name" value="CREB1 phosphorylation through the activation of CaMKII/CaMKK/CaMKIV cascasde"/>
</dbReference>
<dbReference type="Reactome" id="R-DDI-5218920">
    <property type="pathway name" value="VEGFR2 mediated vascular permeability"/>
</dbReference>
<dbReference type="Reactome" id="R-DDI-5607763">
    <property type="pathway name" value="CLEC7A (Dectin-1) induces NFAT activation"/>
</dbReference>
<dbReference type="Reactome" id="R-DDI-5626467">
    <property type="pathway name" value="RHO GTPases activate IQGAPs"/>
</dbReference>
<dbReference type="Reactome" id="R-DDI-6798695">
    <property type="pathway name" value="Neutrophil degranulation"/>
</dbReference>
<dbReference type="Reactome" id="R-DDI-9009391">
    <property type="pathway name" value="Extra-nuclear estrogen signaling"/>
</dbReference>
<dbReference type="Reactome" id="R-DDI-9619229">
    <property type="pathway name" value="Activation of RAC1 downstream of NMDARs"/>
</dbReference>
<dbReference type="PRO" id="PR:O00897"/>
<dbReference type="Proteomes" id="UP000002195">
    <property type="component" value="Chromosome 1"/>
</dbReference>
<dbReference type="GO" id="GO:0000331">
    <property type="term" value="C:contractile vacuole"/>
    <property type="evidence" value="ECO:0007669"/>
    <property type="project" value="UniProtKB-SubCell"/>
</dbReference>
<dbReference type="GO" id="GO:0005737">
    <property type="term" value="C:cytoplasm"/>
    <property type="evidence" value="ECO:0000318"/>
    <property type="project" value="GO_Central"/>
</dbReference>
<dbReference type="GO" id="GO:0005509">
    <property type="term" value="F:calcium ion binding"/>
    <property type="evidence" value="ECO:0000318"/>
    <property type="project" value="GO_Central"/>
</dbReference>
<dbReference type="GO" id="GO:0030234">
    <property type="term" value="F:enzyme regulator activity"/>
    <property type="evidence" value="ECO:0000318"/>
    <property type="project" value="GO_Central"/>
</dbReference>
<dbReference type="GO" id="GO:0000226">
    <property type="term" value="P:microtubule cytoskeleton organization"/>
    <property type="evidence" value="ECO:0000318"/>
    <property type="project" value="GO_Central"/>
</dbReference>
<dbReference type="CDD" id="cd00051">
    <property type="entry name" value="EFh"/>
    <property type="match status" value="2"/>
</dbReference>
<dbReference type="FunFam" id="1.10.238.10:FF:000527">
    <property type="entry name" value="Calmodulin-3"/>
    <property type="match status" value="1"/>
</dbReference>
<dbReference type="Gene3D" id="1.10.238.10">
    <property type="entry name" value="EF-hand"/>
    <property type="match status" value="2"/>
</dbReference>
<dbReference type="InterPro" id="IPR050230">
    <property type="entry name" value="CALM/Myosin/TropC-like"/>
</dbReference>
<dbReference type="InterPro" id="IPR011992">
    <property type="entry name" value="EF-hand-dom_pair"/>
</dbReference>
<dbReference type="InterPro" id="IPR018247">
    <property type="entry name" value="EF_Hand_1_Ca_BS"/>
</dbReference>
<dbReference type="InterPro" id="IPR002048">
    <property type="entry name" value="EF_hand_dom"/>
</dbReference>
<dbReference type="PANTHER" id="PTHR23048:SF0">
    <property type="entry name" value="CALMODULIN LIKE 3"/>
    <property type="match status" value="1"/>
</dbReference>
<dbReference type="PANTHER" id="PTHR23048">
    <property type="entry name" value="MYOSIN LIGHT CHAIN 1, 3"/>
    <property type="match status" value="1"/>
</dbReference>
<dbReference type="Pfam" id="PF13499">
    <property type="entry name" value="EF-hand_7"/>
    <property type="match status" value="2"/>
</dbReference>
<dbReference type="SMART" id="SM00054">
    <property type="entry name" value="EFh"/>
    <property type="match status" value="4"/>
</dbReference>
<dbReference type="SUPFAM" id="SSF47473">
    <property type="entry name" value="EF-hand"/>
    <property type="match status" value="1"/>
</dbReference>
<dbReference type="PROSITE" id="PS00018">
    <property type="entry name" value="EF_HAND_1"/>
    <property type="match status" value="1"/>
</dbReference>
<dbReference type="PROSITE" id="PS50222">
    <property type="entry name" value="EF_HAND_2"/>
    <property type="match status" value="4"/>
</dbReference>
<organism>
    <name type="scientific">Dictyostelium discoideum</name>
    <name type="common">Social amoeba</name>
    <dbReference type="NCBI Taxonomy" id="44689"/>
    <lineage>
        <taxon>Eukaryota</taxon>
        <taxon>Amoebozoa</taxon>
        <taxon>Evosea</taxon>
        <taxon>Eumycetozoa</taxon>
        <taxon>Dictyostelia</taxon>
        <taxon>Dictyosteliales</taxon>
        <taxon>Dictyosteliaceae</taxon>
        <taxon>Dictyostelium</taxon>
    </lineage>
</organism>
<gene>
    <name type="primary">calB</name>
    <name type="ORF">DDB_G0269104</name>
</gene>
<feature type="chain" id="PRO_0000327723" description="Calmodulin-like protein">
    <location>
        <begin position="1"/>
        <end position="149"/>
    </location>
</feature>
<feature type="domain" description="EF-hand 1" evidence="2">
    <location>
        <begin position="6"/>
        <end position="41"/>
    </location>
</feature>
<feature type="domain" description="EF-hand 2" evidence="2">
    <location>
        <begin position="42"/>
        <end position="76"/>
    </location>
</feature>
<feature type="domain" description="EF-hand 3" evidence="2">
    <location>
        <begin position="78"/>
        <end position="113"/>
    </location>
</feature>
<feature type="domain" description="EF-hand 4" evidence="2">
    <location>
        <begin position="113"/>
        <end position="148"/>
    </location>
</feature>
<feature type="binding site" evidence="2">
    <location>
        <position position="19"/>
    </location>
    <ligand>
        <name>Ca(2+)</name>
        <dbReference type="ChEBI" id="CHEBI:29108"/>
    </ligand>
</feature>
<feature type="binding site" evidence="2">
    <location>
        <position position="21"/>
    </location>
    <ligand>
        <name>Ca(2+)</name>
        <dbReference type="ChEBI" id="CHEBI:29108"/>
    </ligand>
</feature>
<feature type="binding site" evidence="2">
    <location>
        <position position="23"/>
    </location>
    <ligand>
        <name>Ca(2+)</name>
        <dbReference type="ChEBI" id="CHEBI:29108"/>
    </ligand>
</feature>
<feature type="binding site" evidence="2">
    <location>
        <position position="25"/>
    </location>
    <ligand>
        <name>Ca(2+)</name>
        <dbReference type="ChEBI" id="CHEBI:29108"/>
    </ligand>
</feature>
<feature type="binding site">
    <location>
        <position position="30"/>
    </location>
    <ligand>
        <name>Ca(2+)</name>
        <dbReference type="ChEBI" id="CHEBI:29108"/>
    </ligand>
</feature>
<keyword id="KW-0106">Calcium</keyword>
<keyword id="KW-0479">Metal-binding</keyword>
<keyword id="KW-1185">Reference proteome</keyword>
<keyword id="KW-0677">Repeat</keyword>
<keyword id="KW-0926">Vacuole</keyword>
<accession>O00897</accession>
<accession>Q55DS1</accession>
<protein>
    <recommendedName>
        <fullName>Calmodulin-like protein</fullName>
    </recommendedName>
</protein>